<accession>A0A2Z4HQ03</accession>
<protein>
    <recommendedName>
        <fullName evidence="3">Probable transporter efuK</fullName>
    </recommendedName>
    <alternativeName>
        <fullName evidence="3">Enfumafungin biosynthesis cluster protein K</fullName>
    </alternativeName>
</protein>
<proteinExistence type="inferred from homology"/>
<evidence type="ECO:0000256" key="1">
    <source>
        <dbReference type="SAM" id="MobiDB-lite"/>
    </source>
</evidence>
<evidence type="ECO:0000269" key="2">
    <source>
    </source>
</evidence>
<evidence type="ECO:0000303" key="3">
    <source>
    </source>
</evidence>
<evidence type="ECO:0000305" key="4"/>
<evidence type="ECO:0000305" key="5">
    <source>
    </source>
</evidence>
<gene>
    <name evidence="3" type="primary">efuK</name>
</gene>
<keyword id="KW-0813">Transport</keyword>
<feature type="chain" id="PRO_0000454465" description="Probable transporter efuK">
    <location>
        <begin position="1"/>
        <end position="696"/>
    </location>
</feature>
<feature type="region of interest" description="Disordered" evidence="1">
    <location>
        <begin position="603"/>
        <end position="642"/>
    </location>
</feature>
<feature type="compositionally biased region" description="Basic and acidic residues" evidence="1">
    <location>
        <begin position="615"/>
        <end position="633"/>
    </location>
</feature>
<comment type="function">
    <text evidence="2 5">Probable transporter; part of the gene cluster that mediates the biosynthesis of enfumafungin, a glycosylated fernene-type triterpenoid with potent antifungal activity, mediated by its interaction with beta-1,3-glucan synthase and the fungal cell wall (PubMed:30051576). Might be involved in transport of enfumafungin to and across organelle membranes (Probable).</text>
</comment>
<comment type="similarity">
    <text evidence="4">Belongs to the OSBP family.</text>
</comment>
<sequence length="696" mass="78433">MTIHSPWETSHSKKGLIDIGTHRLFARVSGPRRKPGDPVILIECGGGSISLLWTGVMRALSPTYRIFTYSRAGLEGSDLPPNRGPRTAVEMADDFEKLLDVAGIKSPYIIVGHSYAGVQIRTWMHVHDRMEDIVGAVFVDTATEYTYPRMPIREPQFWFLMEQIPNPAHVLGYDRVHKFFNKEQWEEVLSTDLGHEEKDVDASAAQLKTWKQFERQIMEDKPVSVIKGYFAEDLRRLCVEAERIGAGTPAQRQYVMENLDSLDRVFEETETEQLRLSSCARMVHAAPGSGHTIVFSDPEIVMNEIKWVVEQYEAKRSIATIKGDLSNITAPPFLLASQSTCEFPSYWAEHPSIFVAPALEPDPKKRALLVLRWFLAALKRQQYAGRDEKEGVKKPLNAFLGELFFAQWQDQSGTTKLVSEQVSHHPPITACYLWNDEHGVRADGFACQSITFSGTVNIKQMGHAILHIDKYDEDYLIPLPNVKVQGLLTGTPYPELVGSYQIACSSGFVADIDFSGKKLFGMSGTKNMLHAALYSADDKQRENPIYTIEGAWNDKFTIRDESTGENVETYDTAANPATILEVAPLDLQDPWESRKAWGETISSLNGGKMQGASDAKSKVEQGQRAMRKQDEQNGSKWEPVFFSNEPRDERYIRLTAVAGTSTEEHSQSGFWKFDKDRAERARKPYHGSLRPDNVES</sequence>
<reference key="1">
    <citation type="journal article" date="2018" name="Environ. Microbiol.">
        <title>Enfumafungin synthase represents a novel lineage of fungal triterpene cyclases.</title>
        <authorList>
            <person name="Kuhnert E."/>
            <person name="Li Y."/>
            <person name="Lan N."/>
            <person name="Yue Q."/>
            <person name="Chen L."/>
            <person name="Cox R.J."/>
            <person name="An Z."/>
            <person name="Yokoyama K."/>
            <person name="Bills G.F."/>
        </authorList>
    </citation>
    <scope>NUCLEOTIDE SEQUENCE [GENOMIC DNA]</scope>
    <scope>FUNCTION</scope>
</reference>
<organism>
    <name type="scientific">Hormonema carpetanum</name>
    <dbReference type="NCBI Taxonomy" id="284138"/>
    <lineage>
        <taxon>Eukaryota</taxon>
        <taxon>Fungi</taxon>
        <taxon>Dikarya</taxon>
        <taxon>Ascomycota</taxon>
        <taxon>Pezizomycotina</taxon>
        <taxon>Dothideomycetes</taxon>
        <taxon>Dothideomycetidae</taxon>
        <taxon>Dothideales</taxon>
        <taxon>Dothioraceae</taxon>
        <taxon>Hormonema</taxon>
    </lineage>
</organism>
<name>EFUK_HORCR</name>
<dbReference type="EMBL" id="MF611893">
    <property type="protein sequence ID" value="AWW17221.1"/>
    <property type="molecule type" value="Genomic_DNA"/>
</dbReference>
<dbReference type="SMR" id="A0A2Z4HQ03"/>
<dbReference type="ESTHER" id="horcr-efuk">
    <property type="family name" value="6_AlphaBeta_hydrolase"/>
</dbReference>
<dbReference type="GO" id="GO:0005829">
    <property type="term" value="C:cytosol"/>
    <property type="evidence" value="ECO:0007669"/>
    <property type="project" value="TreeGrafter"/>
</dbReference>
<dbReference type="GO" id="GO:0016020">
    <property type="term" value="C:membrane"/>
    <property type="evidence" value="ECO:0007669"/>
    <property type="project" value="TreeGrafter"/>
</dbReference>
<dbReference type="GO" id="GO:0008142">
    <property type="term" value="F:oxysterol binding"/>
    <property type="evidence" value="ECO:0007669"/>
    <property type="project" value="TreeGrafter"/>
</dbReference>
<dbReference type="FunFam" id="2.40.160.120:FF:000010">
    <property type="entry name" value="Oxysterol-binding protein homolog 4"/>
    <property type="match status" value="1"/>
</dbReference>
<dbReference type="Gene3D" id="1.10.287.2720">
    <property type="match status" value="1"/>
</dbReference>
<dbReference type="Gene3D" id="2.40.160.120">
    <property type="match status" value="1"/>
</dbReference>
<dbReference type="Gene3D" id="3.30.70.3490">
    <property type="match status" value="1"/>
</dbReference>
<dbReference type="Gene3D" id="3.40.50.1820">
    <property type="entry name" value="alpha/beta hydrolase"/>
    <property type="match status" value="1"/>
</dbReference>
<dbReference type="InterPro" id="IPR000073">
    <property type="entry name" value="AB_hydrolase_1"/>
</dbReference>
<dbReference type="InterPro" id="IPR029058">
    <property type="entry name" value="AB_hydrolase_fold"/>
</dbReference>
<dbReference type="InterPro" id="IPR037239">
    <property type="entry name" value="OSBP_sf"/>
</dbReference>
<dbReference type="InterPro" id="IPR000648">
    <property type="entry name" value="Oxysterol-bd"/>
</dbReference>
<dbReference type="InterPro" id="IPR018494">
    <property type="entry name" value="Oxysterol-bd_CS"/>
</dbReference>
<dbReference type="PANTHER" id="PTHR10972:SF92">
    <property type="entry name" value="OXYSTEROL BINDING PROTEIN"/>
    <property type="match status" value="1"/>
</dbReference>
<dbReference type="PANTHER" id="PTHR10972">
    <property type="entry name" value="OXYSTEROL-BINDING PROTEIN-RELATED"/>
    <property type="match status" value="1"/>
</dbReference>
<dbReference type="Pfam" id="PF00561">
    <property type="entry name" value="Abhydrolase_1"/>
    <property type="match status" value="1"/>
</dbReference>
<dbReference type="Pfam" id="PF01237">
    <property type="entry name" value="Oxysterol_BP"/>
    <property type="match status" value="1"/>
</dbReference>
<dbReference type="SUPFAM" id="SSF53474">
    <property type="entry name" value="alpha/beta-Hydrolases"/>
    <property type="match status" value="1"/>
</dbReference>
<dbReference type="SUPFAM" id="SSF144000">
    <property type="entry name" value="Oxysterol-binding protein-like"/>
    <property type="match status" value="1"/>
</dbReference>
<dbReference type="PROSITE" id="PS01013">
    <property type="entry name" value="OSBP"/>
    <property type="match status" value="1"/>
</dbReference>